<feature type="chain" id="PRO_0000165861" description="Chloramphenicol acetyltransferase">
    <location>
        <begin position="1"/>
        <end position="219"/>
    </location>
</feature>
<feature type="active site" description="Proton acceptor" evidence="1">
    <location>
        <position position="190"/>
    </location>
</feature>
<reference key="1">
    <citation type="journal article" date="1991" name="Antimicrob. Agents Chemother.">
        <title>Relationship between the Clostridium perfringens catQ gene product and chloramphenicol acetyltransferases from other bacteria.</title>
        <authorList>
            <person name="Bannam T.L."/>
            <person name="Rood J.I."/>
        </authorList>
    </citation>
    <scope>NUCLEOTIDE SEQUENCE [GENOMIC DNA]</scope>
    <source>
        <strain>CW531</strain>
    </source>
</reference>
<comment type="function">
    <text>This enzyme is an effector of chloramphenicol resistance in bacteria.</text>
</comment>
<comment type="catalytic activity">
    <reaction evidence="1">
        <text>chloramphenicol + acetyl-CoA = chloramphenicol 3-acetate + CoA</text>
        <dbReference type="Rhea" id="RHEA:18421"/>
        <dbReference type="ChEBI" id="CHEBI:16730"/>
        <dbReference type="ChEBI" id="CHEBI:17698"/>
        <dbReference type="ChEBI" id="CHEBI:57287"/>
        <dbReference type="ChEBI" id="CHEBI:57288"/>
        <dbReference type="EC" id="2.3.1.28"/>
    </reaction>
</comment>
<comment type="subunit">
    <text>Homotrimer.</text>
</comment>
<comment type="similarity">
    <text evidence="2">Belongs to the chloramphenicol acetyltransferase family.</text>
</comment>
<sequence>MKFNLIDIEDWNRKPYFEHYLNAVRCTYSMTANIEITGLLREIKLKGLKLYPTLIYIITTVVNRHKEFRTCFDQKGKLGYWDSMNPSYTVFHKDNETFSSIWTEYDENFPRFYYNYLEDIRNYSDVLNFMPKTGEPANTINVSSIPWVNFTGFNLNIYNDATYLIPIFTLGKYFQQDNKILLPMSVQVHHAVCDGYHISRFFNEAQELASNYETWLGEK</sequence>
<accession>P26825</accession>
<protein>
    <recommendedName>
        <fullName>Chloramphenicol acetyltransferase</fullName>
        <shortName>CAT</shortName>
        <ecNumber>2.3.1.28</ecNumber>
    </recommendedName>
</protein>
<evidence type="ECO:0000255" key="1">
    <source>
        <dbReference type="PROSITE-ProRule" id="PRU10021"/>
    </source>
</evidence>
<evidence type="ECO:0000305" key="2"/>
<proteinExistence type="inferred from homology"/>
<name>CAT1_CLOPF</name>
<gene>
    <name type="primary">catQ</name>
</gene>
<dbReference type="EC" id="2.3.1.28"/>
<dbReference type="EMBL" id="M55620">
    <property type="protein sequence ID" value="AAA23215.1"/>
    <property type="molecule type" value="Genomic_DNA"/>
</dbReference>
<dbReference type="PIR" id="A49793">
    <property type="entry name" value="A49793"/>
</dbReference>
<dbReference type="SMR" id="P26825"/>
<dbReference type="CARD" id="ARO:3002687">
    <property type="molecule name" value="catQ"/>
    <property type="mechanism identifier" value="ARO:0001004"/>
    <property type="mechanism name" value="antibiotic inactivation"/>
</dbReference>
<dbReference type="KEGG" id="ag:AAA23215"/>
<dbReference type="GO" id="GO:0008811">
    <property type="term" value="F:chloramphenicol O-acetyltransferase activity"/>
    <property type="evidence" value="ECO:0007669"/>
    <property type="project" value="UniProtKB-EC"/>
</dbReference>
<dbReference type="GO" id="GO:0046677">
    <property type="term" value="P:response to antibiotic"/>
    <property type="evidence" value="ECO:0007669"/>
    <property type="project" value="UniProtKB-KW"/>
</dbReference>
<dbReference type="Gene3D" id="3.30.559.10">
    <property type="entry name" value="Chloramphenicol acetyltransferase-like domain"/>
    <property type="match status" value="1"/>
</dbReference>
<dbReference type="InterPro" id="IPR023213">
    <property type="entry name" value="CAT-like_dom_sf"/>
</dbReference>
<dbReference type="InterPro" id="IPR018372">
    <property type="entry name" value="Chloramphenicol_AcTrfase_AS"/>
</dbReference>
<dbReference type="InterPro" id="IPR001707">
    <property type="entry name" value="Cmp_AcTrfase"/>
</dbReference>
<dbReference type="NCBIfam" id="NF000491">
    <property type="entry name" value="chloram_CatA"/>
    <property type="match status" value="1"/>
</dbReference>
<dbReference type="PANTHER" id="PTHR38474:SF2">
    <property type="entry name" value="CHLORAMPHENICOL ACETYLTRANSFERASE"/>
    <property type="match status" value="1"/>
</dbReference>
<dbReference type="PANTHER" id="PTHR38474">
    <property type="entry name" value="SLR0299 PROTEIN"/>
    <property type="match status" value="1"/>
</dbReference>
<dbReference type="Pfam" id="PF00302">
    <property type="entry name" value="CAT"/>
    <property type="match status" value="1"/>
</dbReference>
<dbReference type="PIRSF" id="PIRSF000440">
    <property type="entry name" value="CAT"/>
    <property type="match status" value="1"/>
</dbReference>
<dbReference type="SMART" id="SM01059">
    <property type="entry name" value="CAT"/>
    <property type="match status" value="1"/>
</dbReference>
<dbReference type="SUPFAM" id="SSF52777">
    <property type="entry name" value="CoA-dependent acyltransferases"/>
    <property type="match status" value="1"/>
</dbReference>
<dbReference type="PROSITE" id="PS00100">
    <property type="entry name" value="CAT"/>
    <property type="match status" value="1"/>
</dbReference>
<keyword id="KW-0012">Acyltransferase</keyword>
<keyword id="KW-0046">Antibiotic resistance</keyword>
<keyword id="KW-0808">Transferase</keyword>
<organism>
    <name type="scientific">Clostridium perfringens</name>
    <dbReference type="NCBI Taxonomy" id="1502"/>
    <lineage>
        <taxon>Bacteria</taxon>
        <taxon>Bacillati</taxon>
        <taxon>Bacillota</taxon>
        <taxon>Clostridia</taxon>
        <taxon>Eubacteriales</taxon>
        <taxon>Clostridiaceae</taxon>
        <taxon>Clostridium</taxon>
    </lineage>
</organism>